<evidence type="ECO:0000255" key="1">
    <source>
        <dbReference type="HAMAP-Rule" id="MF_01382"/>
    </source>
</evidence>
<evidence type="ECO:0000256" key="2">
    <source>
        <dbReference type="SAM" id="MobiDB-lite"/>
    </source>
</evidence>
<organism>
    <name type="scientific">Desulfovibrio desulfuricans (strain ATCC 27774 / DSM 6949 / MB)</name>
    <dbReference type="NCBI Taxonomy" id="525146"/>
    <lineage>
        <taxon>Bacteria</taxon>
        <taxon>Pseudomonadati</taxon>
        <taxon>Thermodesulfobacteriota</taxon>
        <taxon>Desulfovibrionia</taxon>
        <taxon>Desulfovibrionales</taxon>
        <taxon>Desulfovibrionaceae</taxon>
        <taxon>Desulfovibrio</taxon>
    </lineage>
</organism>
<keyword id="KW-0067">ATP-binding</keyword>
<keyword id="KW-0997">Cell inner membrane</keyword>
<keyword id="KW-1003">Cell membrane</keyword>
<keyword id="KW-0963">Cytoplasm</keyword>
<keyword id="KW-0472">Membrane</keyword>
<keyword id="KW-0479">Metal-binding</keyword>
<keyword id="KW-0547">Nucleotide-binding</keyword>
<keyword id="KW-0653">Protein transport</keyword>
<keyword id="KW-1278">Translocase</keyword>
<keyword id="KW-0811">Translocation</keyword>
<keyword id="KW-0813">Transport</keyword>
<keyword id="KW-0862">Zinc</keyword>
<reference key="1">
    <citation type="submission" date="2009-01" db="EMBL/GenBank/DDBJ databases">
        <title>Complete sequence of Desulfovibrio desulfuricans subsp. desulfuricans str. ATCC 27774.</title>
        <authorList>
            <consortium name="US DOE Joint Genome Institute"/>
            <person name="Lucas S."/>
            <person name="Copeland A."/>
            <person name="Lapidus A."/>
            <person name="Glavina del Rio T."/>
            <person name="Tice H."/>
            <person name="Bruce D."/>
            <person name="Goodwin L."/>
            <person name="Pitluck S."/>
            <person name="Sims D."/>
            <person name="Lu M."/>
            <person name="Kiss H."/>
            <person name="Meineke L."/>
            <person name="Brettin T."/>
            <person name="Detter J.C."/>
            <person name="Han C."/>
            <person name="Larimer F."/>
            <person name="Land M."/>
            <person name="Hauser L."/>
            <person name="Kyrpides N."/>
            <person name="Ovchinnikova G."/>
            <person name="Hazen T.C."/>
        </authorList>
    </citation>
    <scope>NUCLEOTIDE SEQUENCE [LARGE SCALE GENOMIC DNA]</scope>
    <source>
        <strain>ATCC 27774 / DSM 6949 / MB</strain>
    </source>
</reference>
<name>SECA_DESDA</name>
<feature type="chain" id="PRO_1000184225" description="Protein translocase subunit SecA">
    <location>
        <begin position="1"/>
        <end position="858"/>
    </location>
</feature>
<feature type="region of interest" description="Disordered" evidence="2">
    <location>
        <begin position="808"/>
        <end position="848"/>
    </location>
</feature>
<feature type="binding site" evidence="1">
    <location>
        <position position="88"/>
    </location>
    <ligand>
        <name>ATP</name>
        <dbReference type="ChEBI" id="CHEBI:30616"/>
    </ligand>
</feature>
<feature type="binding site" evidence="1">
    <location>
        <begin position="106"/>
        <end position="110"/>
    </location>
    <ligand>
        <name>ATP</name>
        <dbReference type="ChEBI" id="CHEBI:30616"/>
    </ligand>
</feature>
<feature type="binding site" evidence="1">
    <location>
        <position position="494"/>
    </location>
    <ligand>
        <name>ATP</name>
        <dbReference type="ChEBI" id="CHEBI:30616"/>
    </ligand>
</feature>
<feature type="binding site" evidence="1">
    <location>
        <position position="842"/>
    </location>
    <ligand>
        <name>Zn(2+)</name>
        <dbReference type="ChEBI" id="CHEBI:29105"/>
    </ligand>
</feature>
<feature type="binding site" evidence="1">
    <location>
        <position position="844"/>
    </location>
    <ligand>
        <name>Zn(2+)</name>
        <dbReference type="ChEBI" id="CHEBI:29105"/>
    </ligand>
</feature>
<feature type="binding site" evidence="1">
    <location>
        <position position="853"/>
    </location>
    <ligand>
        <name>Zn(2+)</name>
        <dbReference type="ChEBI" id="CHEBI:29105"/>
    </ligand>
</feature>
<feature type="binding site" evidence="1">
    <location>
        <position position="854"/>
    </location>
    <ligand>
        <name>Zn(2+)</name>
        <dbReference type="ChEBI" id="CHEBI:29105"/>
    </ligand>
</feature>
<gene>
    <name evidence="1" type="primary">secA</name>
    <name type="ordered locus">Ddes_1709</name>
</gene>
<dbReference type="EC" id="7.4.2.8" evidence="1"/>
<dbReference type="EMBL" id="CP001358">
    <property type="protein sequence ID" value="ACL49607.1"/>
    <property type="molecule type" value="Genomic_DNA"/>
</dbReference>
<dbReference type="SMR" id="B8J1J9"/>
<dbReference type="STRING" id="525146.Ddes_1709"/>
<dbReference type="KEGG" id="dds:Ddes_1709"/>
<dbReference type="eggNOG" id="COG0653">
    <property type="taxonomic scope" value="Bacteria"/>
</dbReference>
<dbReference type="HOGENOM" id="CLU_005314_3_0_7"/>
<dbReference type="GO" id="GO:0031522">
    <property type="term" value="C:cell envelope Sec protein transport complex"/>
    <property type="evidence" value="ECO:0007669"/>
    <property type="project" value="TreeGrafter"/>
</dbReference>
<dbReference type="GO" id="GO:0005829">
    <property type="term" value="C:cytosol"/>
    <property type="evidence" value="ECO:0007669"/>
    <property type="project" value="TreeGrafter"/>
</dbReference>
<dbReference type="GO" id="GO:0005886">
    <property type="term" value="C:plasma membrane"/>
    <property type="evidence" value="ECO:0007669"/>
    <property type="project" value="UniProtKB-SubCell"/>
</dbReference>
<dbReference type="GO" id="GO:0005524">
    <property type="term" value="F:ATP binding"/>
    <property type="evidence" value="ECO:0007669"/>
    <property type="project" value="UniProtKB-UniRule"/>
</dbReference>
<dbReference type="GO" id="GO:0046872">
    <property type="term" value="F:metal ion binding"/>
    <property type="evidence" value="ECO:0007669"/>
    <property type="project" value="UniProtKB-KW"/>
</dbReference>
<dbReference type="GO" id="GO:0008564">
    <property type="term" value="F:protein-exporting ATPase activity"/>
    <property type="evidence" value="ECO:0007669"/>
    <property type="project" value="UniProtKB-EC"/>
</dbReference>
<dbReference type="GO" id="GO:0065002">
    <property type="term" value="P:intracellular protein transmembrane transport"/>
    <property type="evidence" value="ECO:0007669"/>
    <property type="project" value="UniProtKB-UniRule"/>
</dbReference>
<dbReference type="GO" id="GO:0017038">
    <property type="term" value="P:protein import"/>
    <property type="evidence" value="ECO:0007669"/>
    <property type="project" value="InterPro"/>
</dbReference>
<dbReference type="GO" id="GO:0006605">
    <property type="term" value="P:protein targeting"/>
    <property type="evidence" value="ECO:0007669"/>
    <property type="project" value="UniProtKB-UniRule"/>
</dbReference>
<dbReference type="GO" id="GO:0043952">
    <property type="term" value="P:protein transport by the Sec complex"/>
    <property type="evidence" value="ECO:0007669"/>
    <property type="project" value="TreeGrafter"/>
</dbReference>
<dbReference type="CDD" id="cd17928">
    <property type="entry name" value="DEXDc_SecA"/>
    <property type="match status" value="1"/>
</dbReference>
<dbReference type="CDD" id="cd18803">
    <property type="entry name" value="SF2_C_secA"/>
    <property type="match status" value="1"/>
</dbReference>
<dbReference type="FunFam" id="3.40.50.300:FF:000429">
    <property type="entry name" value="Preprotein translocase subunit SecA"/>
    <property type="match status" value="1"/>
</dbReference>
<dbReference type="FunFam" id="3.90.1440.10:FF:000001">
    <property type="entry name" value="Preprotein translocase subunit SecA"/>
    <property type="match status" value="1"/>
</dbReference>
<dbReference type="FunFam" id="3.40.50.300:FF:000334">
    <property type="entry name" value="Protein translocase subunit SecA"/>
    <property type="match status" value="1"/>
</dbReference>
<dbReference type="Gene3D" id="1.10.3060.10">
    <property type="entry name" value="Helical scaffold and wing domains of SecA"/>
    <property type="match status" value="1"/>
</dbReference>
<dbReference type="Gene3D" id="3.40.50.300">
    <property type="entry name" value="P-loop containing nucleotide triphosphate hydrolases"/>
    <property type="match status" value="3"/>
</dbReference>
<dbReference type="Gene3D" id="3.90.1440.10">
    <property type="entry name" value="SecA, preprotein cross-linking domain"/>
    <property type="match status" value="1"/>
</dbReference>
<dbReference type="HAMAP" id="MF_01382">
    <property type="entry name" value="SecA"/>
    <property type="match status" value="1"/>
</dbReference>
<dbReference type="InterPro" id="IPR014001">
    <property type="entry name" value="Helicase_ATP-bd"/>
</dbReference>
<dbReference type="InterPro" id="IPR001650">
    <property type="entry name" value="Helicase_C-like"/>
</dbReference>
<dbReference type="InterPro" id="IPR027417">
    <property type="entry name" value="P-loop_NTPase"/>
</dbReference>
<dbReference type="InterPro" id="IPR004027">
    <property type="entry name" value="SEC_C_motif"/>
</dbReference>
<dbReference type="InterPro" id="IPR000185">
    <property type="entry name" value="SecA"/>
</dbReference>
<dbReference type="InterPro" id="IPR020937">
    <property type="entry name" value="SecA_CS"/>
</dbReference>
<dbReference type="InterPro" id="IPR011115">
    <property type="entry name" value="SecA_DEAD"/>
</dbReference>
<dbReference type="InterPro" id="IPR014018">
    <property type="entry name" value="SecA_motor_DEAD"/>
</dbReference>
<dbReference type="InterPro" id="IPR011130">
    <property type="entry name" value="SecA_preprotein_X-link_dom"/>
</dbReference>
<dbReference type="InterPro" id="IPR044722">
    <property type="entry name" value="SecA_SF2_C"/>
</dbReference>
<dbReference type="InterPro" id="IPR011116">
    <property type="entry name" value="SecA_Wing/Scaffold"/>
</dbReference>
<dbReference type="InterPro" id="IPR036266">
    <property type="entry name" value="SecA_Wing/Scaffold_sf"/>
</dbReference>
<dbReference type="InterPro" id="IPR036670">
    <property type="entry name" value="SecA_X-link_sf"/>
</dbReference>
<dbReference type="NCBIfam" id="NF006630">
    <property type="entry name" value="PRK09200.1"/>
    <property type="match status" value="1"/>
</dbReference>
<dbReference type="NCBIfam" id="NF009538">
    <property type="entry name" value="PRK12904.1"/>
    <property type="match status" value="1"/>
</dbReference>
<dbReference type="NCBIfam" id="TIGR00963">
    <property type="entry name" value="secA"/>
    <property type="match status" value="1"/>
</dbReference>
<dbReference type="PANTHER" id="PTHR30612:SF0">
    <property type="entry name" value="CHLOROPLAST PROTEIN-TRANSPORTING ATPASE"/>
    <property type="match status" value="1"/>
</dbReference>
<dbReference type="PANTHER" id="PTHR30612">
    <property type="entry name" value="SECA INNER MEMBRANE COMPONENT OF SEC PROTEIN SECRETION SYSTEM"/>
    <property type="match status" value="1"/>
</dbReference>
<dbReference type="Pfam" id="PF21090">
    <property type="entry name" value="P-loop_SecA"/>
    <property type="match status" value="1"/>
</dbReference>
<dbReference type="Pfam" id="PF02810">
    <property type="entry name" value="SEC-C"/>
    <property type="match status" value="1"/>
</dbReference>
<dbReference type="Pfam" id="PF07517">
    <property type="entry name" value="SecA_DEAD"/>
    <property type="match status" value="1"/>
</dbReference>
<dbReference type="Pfam" id="PF01043">
    <property type="entry name" value="SecA_PP_bind"/>
    <property type="match status" value="1"/>
</dbReference>
<dbReference type="Pfam" id="PF07516">
    <property type="entry name" value="SecA_SW"/>
    <property type="match status" value="1"/>
</dbReference>
<dbReference type="PRINTS" id="PR00906">
    <property type="entry name" value="SECA"/>
</dbReference>
<dbReference type="SMART" id="SM00957">
    <property type="entry name" value="SecA_DEAD"/>
    <property type="match status" value="1"/>
</dbReference>
<dbReference type="SMART" id="SM00958">
    <property type="entry name" value="SecA_PP_bind"/>
    <property type="match status" value="1"/>
</dbReference>
<dbReference type="SUPFAM" id="SSF81886">
    <property type="entry name" value="Helical scaffold and wing domains of SecA"/>
    <property type="match status" value="1"/>
</dbReference>
<dbReference type="SUPFAM" id="SSF52540">
    <property type="entry name" value="P-loop containing nucleoside triphosphate hydrolases"/>
    <property type="match status" value="2"/>
</dbReference>
<dbReference type="SUPFAM" id="SSF81767">
    <property type="entry name" value="Pre-protein crosslinking domain of SecA"/>
    <property type="match status" value="1"/>
</dbReference>
<dbReference type="PROSITE" id="PS01312">
    <property type="entry name" value="SECA"/>
    <property type="match status" value="1"/>
</dbReference>
<dbReference type="PROSITE" id="PS51196">
    <property type="entry name" value="SECA_MOTOR_DEAD"/>
    <property type="match status" value="1"/>
</dbReference>
<protein>
    <recommendedName>
        <fullName evidence="1">Protein translocase subunit SecA</fullName>
        <ecNumber evidence="1">7.4.2.8</ecNumber>
    </recommendedName>
</protein>
<comment type="function">
    <text evidence="1">Part of the Sec protein translocase complex. Interacts with the SecYEG preprotein conducting channel. Has a central role in coupling the hydrolysis of ATP to the transfer of proteins into and across the cell membrane, serving as an ATP-driven molecular motor driving the stepwise translocation of polypeptide chains across the membrane.</text>
</comment>
<comment type="catalytic activity">
    <reaction evidence="1">
        <text>ATP + H2O + cellular proteinSide 1 = ADP + phosphate + cellular proteinSide 2.</text>
        <dbReference type="EC" id="7.4.2.8"/>
    </reaction>
</comment>
<comment type="cofactor">
    <cofactor evidence="1">
        <name>Zn(2+)</name>
        <dbReference type="ChEBI" id="CHEBI:29105"/>
    </cofactor>
    <text evidence="1">May bind 1 zinc ion per subunit.</text>
</comment>
<comment type="subunit">
    <text evidence="1">Monomer and homodimer. Part of the essential Sec protein translocation apparatus which comprises SecA, SecYEG and auxiliary proteins SecDF-YajC and YidC.</text>
</comment>
<comment type="subcellular location">
    <subcellularLocation>
        <location evidence="1">Cell inner membrane</location>
        <topology evidence="1">Peripheral membrane protein</topology>
        <orientation evidence="1">Cytoplasmic side</orientation>
    </subcellularLocation>
    <subcellularLocation>
        <location evidence="1">Cytoplasm</location>
    </subcellularLocation>
    <text evidence="1">Distribution is 50-50.</text>
</comment>
<comment type="similarity">
    <text evidence="1">Belongs to the SecA family.</text>
</comment>
<sequence>MFGFLFKKIFGSKNDRYLRRLRSQVQSINALEPQMQELADEDFAARILQYKKAVQEDGQSLDALLPEVFALVREASRRVLGMRHYDMQLIGGMVLHKGKIAEMKTGEGKTLVATLPVVLNALSGKGVHVVTVNDYLAKRDAAWMGQLYGFLGLSTGVIVHGLDDDERKQQYESDITYGTNNEFGFDYLRDNMKFYGHQLVQRGHNYAIVDEVDSILIDEARTPLIISGASDESVGMYRIVDEVVCKLRPEHYTVDEKARTAMLTDEGVAYCEEMLKLDNLFDPANITAQHHVLQSLKAHQVFKRDVDYIVQDDQVVIVDEFTGRLMAGRRYSDGLHQALEAKEGVTIAAENQTLASITFQNYFRLYDKLSGMTGTADTEAVEFHQIYNLEVISIPPNRPMQRKDYPDLIYRSRQEKFDAIVEAITELHKNRQPVLVGTISIETSEMLSHRLSKLGVPHNVLNAKQHEKEAEIVAQAGQPGKVTIATNMAGRGTDIVLGEGVVDLGGLHILGTERHESRRIDNQLRGRSGRQGDPGSSRFYLSLEDDLMRLFGSDRIKGLMEKLGLRDGEAIENAMVTRAVEGAQKRVEAHHFEVRKTLLDYDNVMNQQREVIYALRRELMVEEDLDPVMDEFMNDVLDDVYSTLDGVPVDDHNGLREAAFARLRDVFNLDRVLPENAHLPEREECEPLIRKVLEELRSETGDSYRDIQRYFMLEELDRCWKEHLRNMDALRDGIGLRGYGQRDPKLEYKREGFEMFQAMLFQIRENVFRALSRVRVAPAETAPVEAIEIAPETEEAQGQPLAREYRHKEDRGQLSYSGGGNAEDARNTPAKAAPRIGRNDPCPCGSGRKYKKCCGADK</sequence>
<proteinExistence type="inferred from homology"/>
<accession>B8J1J9</accession>